<accession>Q7A4T3</accession>
<name>Y1683_STAAN</name>
<comment type="function">
    <text evidence="1">May be involved in multidrug export. Transmembrane domains (TMD) form a pore in the cell membrane and the ATP-binding domain (NBD) is responsible for energy generation (By similarity).</text>
</comment>
<comment type="subunit">
    <text evidence="1">Homodimer.</text>
</comment>
<comment type="subcellular location">
    <subcellularLocation>
        <location evidence="1">Cell membrane</location>
        <topology evidence="4">Multi-pass membrane protein</topology>
    </subcellularLocation>
</comment>
<comment type="domain">
    <text>The ATP-binding domain (NBD) and the transmembrane domain (TMD) are fused.</text>
</comment>
<comment type="similarity">
    <text evidence="5">Belongs to the ABC transporter superfamily.</text>
</comment>
<organism>
    <name type="scientific">Staphylococcus aureus (strain N315)</name>
    <dbReference type="NCBI Taxonomy" id="158879"/>
    <lineage>
        <taxon>Bacteria</taxon>
        <taxon>Bacillati</taxon>
        <taxon>Bacillota</taxon>
        <taxon>Bacilli</taxon>
        <taxon>Bacillales</taxon>
        <taxon>Staphylococcaceae</taxon>
        <taxon>Staphylococcus</taxon>
    </lineage>
</organism>
<evidence type="ECO:0000250" key="1"/>
<evidence type="ECO:0000255" key="2"/>
<evidence type="ECO:0000255" key="3">
    <source>
        <dbReference type="PROSITE-ProRule" id="PRU00434"/>
    </source>
</evidence>
<evidence type="ECO:0000255" key="4">
    <source>
        <dbReference type="PROSITE-ProRule" id="PRU00441"/>
    </source>
</evidence>
<evidence type="ECO:0000305" key="5"/>
<sequence>MIKRYLQFVKPYKYRIFATIIVGIIKFGIPMLIPLLIKYAIDGVINNHALTTDEKVHHLTIAIGIALFIFVIVRPPIEFIRQYLAQWTSNKILYDIRKKLYNHLQALSARFYANNQVGQVISRVINDVEQTKDFILTGLMNIWLDCITIIIALSIMFFLDVKLTLAALFIFPFYILTVYVFFGRLRKLTRERSQALAEVQGFLHERVQGISVVKSFAIEDNEAKNFDKKNTNFLTRALKHTRWNAYSFAAINTVTDIGPIIVIGVGAYLAISGSITVGTLAAFVGYLELLFGPLRRLVASFTTLTQSFASMDRVFQLIDEDYDIKNGVGAQPIEIKQGRIDIDHVSFQYNDNEAPILKDINLSIEKGETVAFVGMSGGGKSTLINLIPRFYDVTSGQILIDGHNIKDFLTGSLRNQIGLVQQDNILFSDTVKENILLGRPTATDEEVVEAAKMANAHDFIMNLPQGYDTEVGERGVKLSGGQKQRLSIARIFLNNPPILILDEATSALDLESESIIQEALDVLSKDRTTLIVAHRLSTITHADKIVVIENGHIVETGTHRELIAKQGAYEHLYSIQNL</sequence>
<proteinExistence type="evidence at protein level"/>
<dbReference type="EC" id="7.6.2.-"/>
<dbReference type="EMBL" id="BA000018">
    <property type="protein sequence ID" value="BAB42952.1"/>
    <property type="molecule type" value="Genomic_DNA"/>
</dbReference>
<dbReference type="PIR" id="A89974">
    <property type="entry name" value="A89974"/>
</dbReference>
<dbReference type="RefSeq" id="WP_000597238.1">
    <property type="nucleotide sequence ID" value="NC_002745.2"/>
</dbReference>
<dbReference type="SMR" id="Q7A4T3"/>
<dbReference type="EnsemblBacteria" id="BAB42952">
    <property type="protein sequence ID" value="BAB42952"/>
    <property type="gene ID" value="BAB42952"/>
</dbReference>
<dbReference type="KEGG" id="sau:SA1683"/>
<dbReference type="HOGENOM" id="CLU_000604_84_3_9"/>
<dbReference type="GO" id="GO:0005886">
    <property type="term" value="C:plasma membrane"/>
    <property type="evidence" value="ECO:0007669"/>
    <property type="project" value="UniProtKB-SubCell"/>
</dbReference>
<dbReference type="GO" id="GO:0015421">
    <property type="term" value="F:ABC-type oligopeptide transporter activity"/>
    <property type="evidence" value="ECO:0007669"/>
    <property type="project" value="TreeGrafter"/>
</dbReference>
<dbReference type="GO" id="GO:0005524">
    <property type="term" value="F:ATP binding"/>
    <property type="evidence" value="ECO:0007669"/>
    <property type="project" value="UniProtKB-KW"/>
</dbReference>
<dbReference type="GO" id="GO:0016887">
    <property type="term" value="F:ATP hydrolysis activity"/>
    <property type="evidence" value="ECO:0007669"/>
    <property type="project" value="InterPro"/>
</dbReference>
<dbReference type="CDD" id="cd18554">
    <property type="entry name" value="ABC_6TM_Sav1866_like"/>
    <property type="match status" value="1"/>
</dbReference>
<dbReference type="CDD" id="cd03251">
    <property type="entry name" value="ABCC_MsbA"/>
    <property type="match status" value="1"/>
</dbReference>
<dbReference type="FunFam" id="1.20.1560.10:FF:000069">
    <property type="entry name" value="Multidrug ABC transporter ATP-binding protein"/>
    <property type="match status" value="1"/>
</dbReference>
<dbReference type="FunFam" id="3.40.50.300:FF:000218">
    <property type="entry name" value="Multidrug ABC transporter ATP-binding protein"/>
    <property type="match status" value="1"/>
</dbReference>
<dbReference type="Gene3D" id="1.20.1560.10">
    <property type="entry name" value="ABC transporter type 1, transmembrane domain"/>
    <property type="match status" value="1"/>
</dbReference>
<dbReference type="Gene3D" id="3.40.50.300">
    <property type="entry name" value="P-loop containing nucleotide triphosphate hydrolases"/>
    <property type="match status" value="1"/>
</dbReference>
<dbReference type="InterPro" id="IPR003593">
    <property type="entry name" value="AAA+_ATPase"/>
</dbReference>
<dbReference type="InterPro" id="IPR011527">
    <property type="entry name" value="ABC1_TM_dom"/>
</dbReference>
<dbReference type="InterPro" id="IPR036640">
    <property type="entry name" value="ABC1_TM_sf"/>
</dbReference>
<dbReference type="InterPro" id="IPR003439">
    <property type="entry name" value="ABC_transporter-like_ATP-bd"/>
</dbReference>
<dbReference type="InterPro" id="IPR017871">
    <property type="entry name" value="ABC_transporter-like_CS"/>
</dbReference>
<dbReference type="InterPro" id="IPR027417">
    <property type="entry name" value="P-loop_NTPase"/>
</dbReference>
<dbReference type="InterPro" id="IPR039421">
    <property type="entry name" value="Type_1_exporter"/>
</dbReference>
<dbReference type="PANTHER" id="PTHR43394:SF1">
    <property type="entry name" value="ATP-BINDING CASSETTE SUB-FAMILY B MEMBER 10, MITOCHONDRIAL"/>
    <property type="match status" value="1"/>
</dbReference>
<dbReference type="PANTHER" id="PTHR43394">
    <property type="entry name" value="ATP-DEPENDENT PERMEASE MDL1, MITOCHONDRIAL"/>
    <property type="match status" value="1"/>
</dbReference>
<dbReference type="Pfam" id="PF00664">
    <property type="entry name" value="ABC_membrane"/>
    <property type="match status" value="1"/>
</dbReference>
<dbReference type="Pfam" id="PF00005">
    <property type="entry name" value="ABC_tran"/>
    <property type="match status" value="1"/>
</dbReference>
<dbReference type="SMART" id="SM00382">
    <property type="entry name" value="AAA"/>
    <property type="match status" value="1"/>
</dbReference>
<dbReference type="SUPFAM" id="SSF90123">
    <property type="entry name" value="ABC transporter transmembrane region"/>
    <property type="match status" value="1"/>
</dbReference>
<dbReference type="SUPFAM" id="SSF52540">
    <property type="entry name" value="P-loop containing nucleoside triphosphate hydrolases"/>
    <property type="match status" value="1"/>
</dbReference>
<dbReference type="PROSITE" id="PS50929">
    <property type="entry name" value="ABC_TM1F"/>
    <property type="match status" value="1"/>
</dbReference>
<dbReference type="PROSITE" id="PS00211">
    <property type="entry name" value="ABC_TRANSPORTER_1"/>
    <property type="match status" value="1"/>
</dbReference>
<dbReference type="PROSITE" id="PS50893">
    <property type="entry name" value="ABC_TRANSPORTER_2"/>
    <property type="match status" value="1"/>
</dbReference>
<feature type="chain" id="PRO_0000271550" description="Putative multidrug export ATP-binding/permease protein SA1683">
    <location>
        <begin position="1"/>
        <end position="578"/>
    </location>
</feature>
<feature type="topological domain" description="Cytoplasmic" evidence="2">
    <location>
        <begin position="1"/>
        <end position="15"/>
    </location>
</feature>
<feature type="transmembrane region" description="Helical" evidence="4">
    <location>
        <begin position="16"/>
        <end position="36"/>
    </location>
</feature>
<feature type="topological domain" description="Extracellular" evidence="2">
    <location>
        <begin position="37"/>
        <end position="59"/>
    </location>
</feature>
<feature type="transmembrane region" description="Helical" evidence="4">
    <location>
        <begin position="60"/>
        <end position="80"/>
    </location>
</feature>
<feature type="topological domain" description="Cytoplasmic" evidence="2">
    <location>
        <begin position="81"/>
        <end position="138"/>
    </location>
</feature>
<feature type="transmembrane region" description="Helical" evidence="4">
    <location>
        <begin position="139"/>
        <end position="159"/>
    </location>
</feature>
<feature type="topological domain" description="Extracellular" evidence="2">
    <location>
        <begin position="160"/>
        <end position="162"/>
    </location>
</feature>
<feature type="transmembrane region" description="Helical" evidence="4">
    <location>
        <begin position="163"/>
        <end position="183"/>
    </location>
</feature>
<feature type="topological domain" description="Cytoplasmic" evidence="2">
    <location>
        <begin position="184"/>
        <end position="244"/>
    </location>
</feature>
<feature type="transmembrane region" description="Helical" evidence="4">
    <location>
        <begin position="245"/>
        <end position="263"/>
    </location>
</feature>
<feature type="topological domain" description="Extracellular" evidence="2">
    <location>
        <begin position="264"/>
        <end position="269"/>
    </location>
</feature>
<feature type="transmembrane region" description="Helical" evidence="4">
    <location>
        <begin position="270"/>
        <end position="287"/>
    </location>
</feature>
<feature type="topological domain" description="Cytoplasmic" evidence="2">
    <location>
        <begin position="288"/>
        <end position="578"/>
    </location>
</feature>
<feature type="domain" description="ABC transmembrane type-1" evidence="4">
    <location>
        <begin position="16"/>
        <end position="306"/>
    </location>
</feature>
<feature type="domain" description="ABC transporter" evidence="3">
    <location>
        <begin position="340"/>
        <end position="575"/>
    </location>
</feature>
<feature type="binding site" evidence="3">
    <location>
        <begin position="374"/>
        <end position="381"/>
    </location>
    <ligand>
        <name>ATP</name>
        <dbReference type="ChEBI" id="CHEBI:30616"/>
    </ligand>
</feature>
<reference key="1">
    <citation type="journal article" date="2001" name="Lancet">
        <title>Whole genome sequencing of meticillin-resistant Staphylococcus aureus.</title>
        <authorList>
            <person name="Kuroda M."/>
            <person name="Ohta T."/>
            <person name="Uchiyama I."/>
            <person name="Baba T."/>
            <person name="Yuzawa H."/>
            <person name="Kobayashi I."/>
            <person name="Cui L."/>
            <person name="Oguchi A."/>
            <person name="Aoki K."/>
            <person name="Nagai Y."/>
            <person name="Lian J.-Q."/>
            <person name="Ito T."/>
            <person name="Kanamori M."/>
            <person name="Matsumaru H."/>
            <person name="Maruyama A."/>
            <person name="Murakami H."/>
            <person name="Hosoyama A."/>
            <person name="Mizutani-Ui Y."/>
            <person name="Takahashi N.K."/>
            <person name="Sawano T."/>
            <person name="Inoue R."/>
            <person name="Kaito C."/>
            <person name="Sekimizu K."/>
            <person name="Hirakawa H."/>
            <person name="Kuhara S."/>
            <person name="Goto S."/>
            <person name="Yabuzaki J."/>
            <person name="Kanehisa M."/>
            <person name="Yamashita A."/>
            <person name="Oshima K."/>
            <person name="Furuya K."/>
            <person name="Yoshino C."/>
            <person name="Shiba T."/>
            <person name="Hattori M."/>
            <person name="Ogasawara N."/>
            <person name="Hayashi H."/>
            <person name="Hiramatsu K."/>
        </authorList>
    </citation>
    <scope>NUCLEOTIDE SEQUENCE [LARGE SCALE GENOMIC DNA]</scope>
    <source>
        <strain>N315</strain>
    </source>
</reference>
<reference key="2">
    <citation type="submission" date="2007-10" db="UniProtKB">
        <title>Shotgun proteomic analysis of total and membrane protein extracts of S. aureus strain N315.</title>
        <authorList>
            <person name="Vaezzadeh A.R."/>
            <person name="Deshusses J."/>
            <person name="Lescuyer P."/>
            <person name="Hochstrasser D.F."/>
        </authorList>
    </citation>
    <scope>IDENTIFICATION BY MASS SPECTROMETRY [LARGE SCALE ANALYSIS]</scope>
    <source>
        <strain>N315</strain>
    </source>
</reference>
<gene>
    <name type="ordered locus">SA1683</name>
</gene>
<protein>
    <recommendedName>
        <fullName>Putative multidrug export ATP-binding/permease protein SA1683</fullName>
        <ecNumber>7.6.2.-</ecNumber>
    </recommendedName>
</protein>
<keyword id="KW-0067">ATP-binding</keyword>
<keyword id="KW-1003">Cell membrane</keyword>
<keyword id="KW-0472">Membrane</keyword>
<keyword id="KW-0547">Nucleotide-binding</keyword>
<keyword id="KW-1278">Translocase</keyword>
<keyword id="KW-0812">Transmembrane</keyword>
<keyword id="KW-1133">Transmembrane helix</keyword>
<keyword id="KW-0813">Transport</keyword>